<proteinExistence type="inferred from homology"/>
<evidence type="ECO:0000255" key="1">
    <source>
        <dbReference type="HAMAP-Rule" id="MF_03111"/>
    </source>
</evidence>
<name>COQ4_CANAL</name>
<feature type="chain" id="PRO_0000388103" description="Ubiquinone biosynthesis protein COQ4, mitochondrial">
    <location>
        <begin position="1"/>
        <end position="323"/>
    </location>
</feature>
<feature type="binding site" evidence="1">
    <location>
        <position position="205"/>
    </location>
    <ligand>
        <name>Zn(2+)</name>
        <dbReference type="ChEBI" id="CHEBI:29105"/>
    </ligand>
</feature>
<feature type="binding site" evidence="1">
    <location>
        <position position="206"/>
    </location>
    <ligand>
        <name>Zn(2+)</name>
        <dbReference type="ChEBI" id="CHEBI:29105"/>
    </ligand>
</feature>
<feature type="binding site" evidence="1">
    <location>
        <position position="209"/>
    </location>
    <ligand>
        <name>Zn(2+)</name>
        <dbReference type="ChEBI" id="CHEBI:29105"/>
    </ligand>
</feature>
<feature type="binding site" evidence="1">
    <location>
        <position position="221"/>
    </location>
    <ligand>
        <name>Zn(2+)</name>
        <dbReference type="ChEBI" id="CHEBI:29105"/>
    </ligand>
</feature>
<sequence>MLKSTVNNTRIKCGHIDQRRNYLFTTLAGTVLGSFLWSKNNVLASKMENGELHYHDPNLKFNKKLFNGKPPFERRTPDYPGHVPLYNFEKVLMFLGSSMGAFFHPEENKYIVALGESTAITPILQNLRHKMLSDPVGRTILREKPRMTSDSLNLTYLRSLPDNTIGKNYVNWLDKEHVSPDTRVAVRYIDNEELAYIYQRYRECHDFYHAITGLPIIIEGEIAVKVFEFANIGIPMSGLGALFAPLRLKSSQRQRLREIYYPWAIKNGLFSKPLINVYWEKILEKDVDEFRQEMGIQQPPDLRNMRKEYFAKKKLEKQLQGGK</sequence>
<protein>
    <recommendedName>
        <fullName evidence="1">Ubiquinone biosynthesis protein COQ4, mitochondrial</fullName>
    </recommendedName>
    <alternativeName>
        <fullName>4-hydroxy-3-methoxy-5-polyprenylbenzoate decarboxylase</fullName>
        <ecNumber evidence="1">4.1.1.130</ecNumber>
    </alternativeName>
    <alternativeName>
        <fullName evidence="1">Coenzyme Q biosynthesis protein 4</fullName>
    </alternativeName>
</protein>
<gene>
    <name evidence="1" type="primary">COQ4</name>
    <name type="ordered locus">CAALFM_C103160CA</name>
    <name type="ORF">CaO19.10526</name>
    <name type="ORF">CaO19.3008</name>
</gene>
<keyword id="KW-0456">Lyase</keyword>
<keyword id="KW-0472">Membrane</keyword>
<keyword id="KW-0479">Metal-binding</keyword>
<keyword id="KW-0496">Mitochondrion</keyword>
<keyword id="KW-0999">Mitochondrion inner membrane</keyword>
<keyword id="KW-1185">Reference proteome</keyword>
<keyword id="KW-0831">Ubiquinone biosynthesis</keyword>
<keyword id="KW-0862">Zinc</keyword>
<reference key="1">
    <citation type="journal article" date="2004" name="Proc. Natl. Acad. Sci. U.S.A.">
        <title>The diploid genome sequence of Candida albicans.</title>
        <authorList>
            <person name="Jones T."/>
            <person name="Federspiel N.A."/>
            <person name="Chibana H."/>
            <person name="Dungan J."/>
            <person name="Kalman S."/>
            <person name="Magee B.B."/>
            <person name="Newport G."/>
            <person name="Thorstenson Y.R."/>
            <person name="Agabian N."/>
            <person name="Magee P.T."/>
            <person name="Davis R.W."/>
            <person name="Scherer S."/>
        </authorList>
    </citation>
    <scope>NUCLEOTIDE SEQUENCE [LARGE SCALE GENOMIC DNA]</scope>
    <source>
        <strain>SC5314 / ATCC MYA-2876</strain>
    </source>
</reference>
<reference key="2">
    <citation type="journal article" date="2007" name="Genome Biol.">
        <title>Assembly of the Candida albicans genome into sixteen supercontigs aligned on the eight chromosomes.</title>
        <authorList>
            <person name="van het Hoog M."/>
            <person name="Rast T.J."/>
            <person name="Martchenko M."/>
            <person name="Grindle S."/>
            <person name="Dignard D."/>
            <person name="Hogues H."/>
            <person name="Cuomo C."/>
            <person name="Berriman M."/>
            <person name="Scherer S."/>
            <person name="Magee B.B."/>
            <person name="Whiteway M."/>
            <person name="Chibana H."/>
            <person name="Nantel A."/>
            <person name="Magee P.T."/>
        </authorList>
    </citation>
    <scope>GENOME REANNOTATION</scope>
    <source>
        <strain>SC5314 / ATCC MYA-2876</strain>
    </source>
</reference>
<reference key="3">
    <citation type="journal article" date="2013" name="Genome Biol.">
        <title>Assembly of a phased diploid Candida albicans genome facilitates allele-specific measurements and provides a simple model for repeat and indel structure.</title>
        <authorList>
            <person name="Muzzey D."/>
            <person name="Schwartz K."/>
            <person name="Weissman J.S."/>
            <person name="Sherlock G."/>
        </authorList>
    </citation>
    <scope>NUCLEOTIDE SEQUENCE [LARGE SCALE GENOMIC DNA]</scope>
    <scope>GENOME REANNOTATION</scope>
    <source>
        <strain>SC5314 / ATCC MYA-2876</strain>
    </source>
</reference>
<organism>
    <name type="scientific">Candida albicans (strain SC5314 / ATCC MYA-2876)</name>
    <name type="common">Yeast</name>
    <dbReference type="NCBI Taxonomy" id="237561"/>
    <lineage>
        <taxon>Eukaryota</taxon>
        <taxon>Fungi</taxon>
        <taxon>Dikarya</taxon>
        <taxon>Ascomycota</taxon>
        <taxon>Saccharomycotina</taxon>
        <taxon>Pichiomycetes</taxon>
        <taxon>Debaryomycetaceae</taxon>
        <taxon>Candida/Lodderomyces clade</taxon>
        <taxon>Candida</taxon>
    </lineage>
</organism>
<accession>Q5AI44</accession>
<accession>A0A1D8PCX7</accession>
<comment type="function">
    <text evidence="1">Lyase that catalyzes the C1-decarboxylation of 4-hydroxy-3-methoxy-5-(all-trans-polyprenyl)benzoic acid into 2-methoxy-6-(all-trans-polyprenyl)phenol during ubiquinone biosynthesis.</text>
</comment>
<comment type="catalytic activity">
    <reaction evidence="1">
        <text>a 4-hydroxy-3-methoxy-5-(all-trans-polyprenyl)benzoate + H(+) = a 2-methoxy-6-(all-trans-polyprenyl)phenol + CO2</text>
        <dbReference type="Rhea" id="RHEA:81179"/>
        <dbReference type="Rhea" id="RHEA-COMP:9551"/>
        <dbReference type="Rhea" id="RHEA-COMP:10931"/>
        <dbReference type="ChEBI" id="CHEBI:15378"/>
        <dbReference type="ChEBI" id="CHEBI:16526"/>
        <dbReference type="ChEBI" id="CHEBI:62731"/>
        <dbReference type="ChEBI" id="CHEBI:84443"/>
        <dbReference type="EC" id="4.1.1.130"/>
    </reaction>
</comment>
<comment type="cofactor">
    <cofactor evidence="1">
        <name>Zn(2+)</name>
        <dbReference type="ChEBI" id="CHEBI:29105"/>
    </cofactor>
</comment>
<comment type="pathway">
    <text evidence="1">Cofactor biosynthesis; ubiquinone biosynthesis.</text>
</comment>
<comment type="subunit">
    <text evidence="1">Component of a multi-subunit COQ enzyme complex, composed of at least COQ3, COQ4, COQ5, COQ6, COQ7 and COQ9.</text>
</comment>
<comment type="subcellular location">
    <subcellularLocation>
        <location evidence="1">Mitochondrion inner membrane</location>
        <topology evidence="1">Peripheral membrane protein</topology>
        <orientation evidence="1">Matrix side</orientation>
    </subcellularLocation>
</comment>
<comment type="miscellaneous">
    <text evidence="1">This protein may be expected to contain an N-terminal transit peptide but none has been predicted.</text>
</comment>
<comment type="similarity">
    <text evidence="1">Belongs to the COQ4 family.</text>
</comment>
<dbReference type="EC" id="4.1.1.130" evidence="1"/>
<dbReference type="EMBL" id="CP017623">
    <property type="protein sequence ID" value="AOW25997.1"/>
    <property type="molecule type" value="Genomic_DNA"/>
</dbReference>
<dbReference type="RefSeq" id="XP_721506.2">
    <property type="nucleotide sequence ID" value="XM_716413.2"/>
</dbReference>
<dbReference type="SMR" id="Q5AI44"/>
<dbReference type="FunCoup" id="Q5AI44">
    <property type="interactions" value="550"/>
</dbReference>
<dbReference type="STRING" id="237561.Q5AI44"/>
<dbReference type="EnsemblFungi" id="C1_03160C_A-T">
    <property type="protein sequence ID" value="C1_03160C_A-T-p1"/>
    <property type="gene ID" value="C1_03160C_A"/>
</dbReference>
<dbReference type="GeneID" id="3636804"/>
<dbReference type="KEGG" id="cal:CAALFM_C103160CA"/>
<dbReference type="CGD" id="CAL0000193093">
    <property type="gene designation" value="COQ4"/>
</dbReference>
<dbReference type="VEuPathDB" id="FungiDB:C1_03160C_A"/>
<dbReference type="eggNOG" id="KOG3244">
    <property type="taxonomic scope" value="Eukaryota"/>
</dbReference>
<dbReference type="HOGENOM" id="CLU_061241_0_2_1"/>
<dbReference type="InParanoid" id="Q5AI44"/>
<dbReference type="OMA" id="YYERHFH"/>
<dbReference type="OrthoDB" id="4249at2759"/>
<dbReference type="UniPathway" id="UPA00232"/>
<dbReference type="PRO" id="PR:Q5AI44"/>
<dbReference type="Proteomes" id="UP000000559">
    <property type="component" value="Chromosome 1"/>
</dbReference>
<dbReference type="GO" id="GO:0031314">
    <property type="term" value="C:extrinsic component of mitochondrial inner membrane"/>
    <property type="evidence" value="ECO:0007669"/>
    <property type="project" value="UniProtKB-UniRule"/>
</dbReference>
<dbReference type="GO" id="GO:0005739">
    <property type="term" value="C:mitochondrion"/>
    <property type="evidence" value="ECO:0000318"/>
    <property type="project" value="GO_Central"/>
</dbReference>
<dbReference type="GO" id="GO:0006744">
    <property type="term" value="P:ubiquinone biosynthetic process"/>
    <property type="evidence" value="ECO:0007669"/>
    <property type="project" value="UniProtKB-UniRule"/>
</dbReference>
<dbReference type="HAMAP" id="MF_03111">
    <property type="entry name" value="Coq4"/>
    <property type="match status" value="1"/>
</dbReference>
<dbReference type="InterPro" id="IPR007715">
    <property type="entry name" value="Coq4"/>
</dbReference>
<dbReference type="InterPro" id="IPR027540">
    <property type="entry name" value="Coq4_euk"/>
</dbReference>
<dbReference type="PANTHER" id="PTHR12922">
    <property type="entry name" value="UBIQUINONE BIOSYNTHESIS PROTEIN"/>
    <property type="match status" value="1"/>
</dbReference>
<dbReference type="PANTHER" id="PTHR12922:SF7">
    <property type="entry name" value="UBIQUINONE BIOSYNTHESIS PROTEIN COQ4 HOMOLOG, MITOCHONDRIAL"/>
    <property type="match status" value="1"/>
</dbReference>
<dbReference type="Pfam" id="PF05019">
    <property type="entry name" value="Coq4"/>
    <property type="match status" value="1"/>
</dbReference>